<sequence>MAKKVAGQLKLQVKAGSANPSPPIGPALGQRGINIMEFCKAFNAATQEMEKGMPIPVVITYYQDKSFTFAMKQPPVSYWLKKEAKITSGSKTPGKGPKAGTLTKAQIKTIAEAKMKDLNAADIEGAMAMIEGSARAMGLEVVG</sequence>
<proteinExistence type="inferred from homology"/>
<protein>
    <recommendedName>
        <fullName evidence="1">Large ribosomal subunit protein uL11</fullName>
    </recommendedName>
    <alternativeName>
        <fullName evidence="2">50S ribosomal protein L11</fullName>
    </alternativeName>
</protein>
<comment type="function">
    <text evidence="1">Forms part of the ribosomal stalk which helps the ribosome interact with GTP-bound translation factors.</text>
</comment>
<comment type="subunit">
    <text evidence="1">Part of the ribosomal stalk of the 50S ribosomal subunit. Interacts with L10 and the large rRNA to form the base of the stalk. L10 forms an elongated spine to which L12 dimers bind in a sequential fashion forming a multimeric L10(L12)X complex.</text>
</comment>
<comment type="PTM">
    <text evidence="1">One or more lysine residues are methylated.</text>
</comment>
<comment type="similarity">
    <text evidence="1">Belongs to the universal ribosomal protein uL11 family.</text>
</comment>
<reference key="1">
    <citation type="journal article" date="2010" name="Appl. Environ. Microbiol.">
        <title>Conserved symbiotic plasmid DNA sequences in the multireplicon pangenomic structure of Rhizobium etli.</title>
        <authorList>
            <person name="Gonzalez V."/>
            <person name="Acosta J.L."/>
            <person name="Santamaria R.I."/>
            <person name="Bustos P."/>
            <person name="Fernandez J.L."/>
            <person name="Hernandez Gonzalez I.L."/>
            <person name="Diaz R."/>
            <person name="Flores M."/>
            <person name="Palacios R."/>
            <person name="Mora J."/>
            <person name="Davila G."/>
        </authorList>
    </citation>
    <scope>NUCLEOTIDE SEQUENCE [LARGE SCALE GENOMIC DNA]</scope>
    <source>
        <strain>CIAT 652</strain>
    </source>
</reference>
<organism>
    <name type="scientific">Rhizobium etli (strain CIAT 652)</name>
    <dbReference type="NCBI Taxonomy" id="491916"/>
    <lineage>
        <taxon>Bacteria</taxon>
        <taxon>Pseudomonadati</taxon>
        <taxon>Pseudomonadota</taxon>
        <taxon>Alphaproteobacteria</taxon>
        <taxon>Hyphomicrobiales</taxon>
        <taxon>Rhizobiaceae</taxon>
        <taxon>Rhizobium/Agrobacterium group</taxon>
        <taxon>Rhizobium</taxon>
    </lineage>
</organism>
<gene>
    <name evidence="1" type="primary">rplK</name>
    <name type="ordered locus">RHECIAT_CH0001737</name>
</gene>
<feature type="chain" id="PRO_1000195697" description="Large ribosomal subunit protein uL11">
    <location>
        <begin position="1"/>
        <end position="143"/>
    </location>
</feature>
<name>RL11_RHIE6</name>
<accession>B3PW55</accession>
<dbReference type="EMBL" id="CP001074">
    <property type="protein sequence ID" value="ACE90707.1"/>
    <property type="molecule type" value="Genomic_DNA"/>
</dbReference>
<dbReference type="SMR" id="B3PW55"/>
<dbReference type="KEGG" id="rec:RHECIAT_CH0001737"/>
<dbReference type="eggNOG" id="COG0080">
    <property type="taxonomic scope" value="Bacteria"/>
</dbReference>
<dbReference type="HOGENOM" id="CLU_074237_2_0_5"/>
<dbReference type="Proteomes" id="UP000008817">
    <property type="component" value="Chromosome"/>
</dbReference>
<dbReference type="GO" id="GO:0022625">
    <property type="term" value="C:cytosolic large ribosomal subunit"/>
    <property type="evidence" value="ECO:0007669"/>
    <property type="project" value="TreeGrafter"/>
</dbReference>
<dbReference type="GO" id="GO:0070180">
    <property type="term" value="F:large ribosomal subunit rRNA binding"/>
    <property type="evidence" value="ECO:0007669"/>
    <property type="project" value="UniProtKB-UniRule"/>
</dbReference>
<dbReference type="GO" id="GO:0003735">
    <property type="term" value="F:structural constituent of ribosome"/>
    <property type="evidence" value="ECO:0007669"/>
    <property type="project" value="InterPro"/>
</dbReference>
<dbReference type="GO" id="GO:0006412">
    <property type="term" value="P:translation"/>
    <property type="evidence" value="ECO:0007669"/>
    <property type="project" value="UniProtKB-UniRule"/>
</dbReference>
<dbReference type="CDD" id="cd00349">
    <property type="entry name" value="Ribosomal_L11"/>
    <property type="match status" value="1"/>
</dbReference>
<dbReference type="FunFam" id="3.30.1550.10:FF:000001">
    <property type="entry name" value="50S ribosomal protein L11"/>
    <property type="match status" value="1"/>
</dbReference>
<dbReference type="Gene3D" id="1.10.10.250">
    <property type="entry name" value="Ribosomal protein L11, C-terminal domain"/>
    <property type="match status" value="1"/>
</dbReference>
<dbReference type="Gene3D" id="3.30.1550.10">
    <property type="entry name" value="Ribosomal protein L11/L12, N-terminal domain"/>
    <property type="match status" value="1"/>
</dbReference>
<dbReference type="HAMAP" id="MF_00736">
    <property type="entry name" value="Ribosomal_uL11"/>
    <property type="match status" value="1"/>
</dbReference>
<dbReference type="InterPro" id="IPR000911">
    <property type="entry name" value="Ribosomal_uL11"/>
</dbReference>
<dbReference type="InterPro" id="IPR006519">
    <property type="entry name" value="Ribosomal_uL11_bac-typ"/>
</dbReference>
<dbReference type="InterPro" id="IPR020783">
    <property type="entry name" value="Ribosomal_uL11_C"/>
</dbReference>
<dbReference type="InterPro" id="IPR036769">
    <property type="entry name" value="Ribosomal_uL11_C_sf"/>
</dbReference>
<dbReference type="InterPro" id="IPR020784">
    <property type="entry name" value="Ribosomal_uL11_N"/>
</dbReference>
<dbReference type="InterPro" id="IPR036796">
    <property type="entry name" value="Ribosomal_uL11_N_sf"/>
</dbReference>
<dbReference type="NCBIfam" id="TIGR01632">
    <property type="entry name" value="L11_bact"/>
    <property type="match status" value="1"/>
</dbReference>
<dbReference type="PANTHER" id="PTHR11661">
    <property type="entry name" value="60S RIBOSOMAL PROTEIN L12"/>
    <property type="match status" value="1"/>
</dbReference>
<dbReference type="PANTHER" id="PTHR11661:SF1">
    <property type="entry name" value="LARGE RIBOSOMAL SUBUNIT PROTEIN UL11M"/>
    <property type="match status" value="1"/>
</dbReference>
<dbReference type="Pfam" id="PF00298">
    <property type="entry name" value="Ribosomal_L11"/>
    <property type="match status" value="1"/>
</dbReference>
<dbReference type="Pfam" id="PF03946">
    <property type="entry name" value="Ribosomal_L11_N"/>
    <property type="match status" value="1"/>
</dbReference>
<dbReference type="SMART" id="SM00649">
    <property type="entry name" value="RL11"/>
    <property type="match status" value="1"/>
</dbReference>
<dbReference type="SUPFAM" id="SSF54747">
    <property type="entry name" value="Ribosomal L11/L12e N-terminal domain"/>
    <property type="match status" value="1"/>
</dbReference>
<dbReference type="SUPFAM" id="SSF46906">
    <property type="entry name" value="Ribosomal protein L11, C-terminal domain"/>
    <property type="match status" value="1"/>
</dbReference>
<keyword id="KW-0488">Methylation</keyword>
<keyword id="KW-0687">Ribonucleoprotein</keyword>
<keyword id="KW-0689">Ribosomal protein</keyword>
<keyword id="KW-0694">RNA-binding</keyword>
<keyword id="KW-0699">rRNA-binding</keyword>
<evidence type="ECO:0000255" key="1">
    <source>
        <dbReference type="HAMAP-Rule" id="MF_00736"/>
    </source>
</evidence>
<evidence type="ECO:0000305" key="2"/>